<feature type="chain" id="PRO_0000064876" description="2-vinyl bacteriochlorophyllide hydratase">
    <location>
        <begin position="1"/>
        <end position="171"/>
    </location>
</feature>
<gene>
    <name type="primary">bchF</name>
    <name type="ordered locus">RCAP_rcc00666</name>
</gene>
<sequence length="171" mass="19254">MPNSPQNPSRKALYTEEERARRDATPWTLVQAILAPLQFLAFGVSLVLVVRFLFTGEGYEAATISILIKTLLLYTIMVTGAIWEKVVFGQYLFAPAFFWEDVFSFGVIALHTAYLWALFTGQPDNMQMFIALAAYATYVINAGQFLWKLRQARLQAASEDAGTLVMERGTR</sequence>
<protein>
    <recommendedName>
        <fullName>2-vinyl bacteriochlorophyllide hydratase</fullName>
        <ecNumber>4.2.1.-</ecNumber>
    </recommendedName>
</protein>
<reference key="1">
    <citation type="journal article" date="1993" name="J. Bacteriol.">
        <title>bchFNBH bacteriochlorophyll synthesis genes of Rhodobacter capsulatus and identification of the third subunit of light-independent protochlorophyllide reductase in bacteria and plants.</title>
        <authorList>
            <person name="Burke D.H."/>
            <person name="Alberti M."/>
            <person name="Hearst J.E."/>
        </authorList>
    </citation>
    <scope>NUCLEOTIDE SEQUENCE [GENOMIC DNA]</scope>
    <source>
        <strain>ATCC BAA-309 / NBRC 16581 / SB1003</strain>
    </source>
</reference>
<reference key="2">
    <citation type="journal article" date="2010" name="J. Bacteriol.">
        <title>Complete genome sequence of the photosynthetic purple nonsulfur bacterium Rhodobacter capsulatus SB 1003.</title>
        <authorList>
            <person name="Strnad H."/>
            <person name="Lapidus A."/>
            <person name="Paces J."/>
            <person name="Ulbrich P."/>
            <person name="Vlcek C."/>
            <person name="Paces V."/>
            <person name="Haselkorn R."/>
        </authorList>
    </citation>
    <scope>NUCLEOTIDE SEQUENCE [LARGE SCALE GENOMIC DNA]</scope>
    <source>
        <strain>ATCC BAA-309 / NBRC 16581 / SB1003</strain>
    </source>
</reference>
<organism>
    <name type="scientific">Rhodobacter capsulatus (strain ATCC BAA-309 / NBRC 16581 / SB1003)</name>
    <dbReference type="NCBI Taxonomy" id="272942"/>
    <lineage>
        <taxon>Bacteria</taxon>
        <taxon>Pseudomonadati</taxon>
        <taxon>Pseudomonadota</taxon>
        <taxon>Alphaproteobacteria</taxon>
        <taxon>Rhodobacterales</taxon>
        <taxon>Rhodobacter group</taxon>
        <taxon>Rhodobacter</taxon>
    </lineage>
</organism>
<proteinExistence type="predicted"/>
<keyword id="KW-0077">Bacteriochlorophyll biosynthesis</keyword>
<keyword id="KW-0149">Chlorophyll biosynthesis</keyword>
<keyword id="KW-0456">Lyase</keyword>
<keyword id="KW-0602">Photosynthesis</keyword>
<keyword id="KW-1185">Reference proteome</keyword>
<name>BCHF_RHOCB</name>
<accession>P26165</accession>
<accession>D5ANS7</accession>
<comment type="pathway">
    <text>Porphyrin-containing compound metabolism; bacteriochlorophyll biosynthesis (light-independent).</text>
</comment>
<dbReference type="EC" id="4.2.1.-"/>
<dbReference type="EMBL" id="Z11165">
    <property type="protein sequence ID" value="CAA77527.1"/>
    <property type="molecule type" value="Genomic_DNA"/>
</dbReference>
<dbReference type="EMBL" id="CP001312">
    <property type="protein sequence ID" value="ADE84431.1"/>
    <property type="molecule type" value="Genomic_DNA"/>
</dbReference>
<dbReference type="PIR" id="A49851">
    <property type="entry name" value="A49851"/>
</dbReference>
<dbReference type="RefSeq" id="WP_013066410.1">
    <property type="nucleotide sequence ID" value="NC_014034.1"/>
</dbReference>
<dbReference type="STRING" id="272942.RCAP_rcc00666"/>
<dbReference type="GeneID" id="31489612"/>
<dbReference type="KEGG" id="rcp:RCAP_rcc00666"/>
<dbReference type="eggNOG" id="ENOG502ZS4D">
    <property type="taxonomic scope" value="Bacteria"/>
</dbReference>
<dbReference type="HOGENOM" id="CLU_106299_0_0_5"/>
<dbReference type="OrthoDB" id="8562352at2"/>
<dbReference type="BioCyc" id="MetaCyc:MONOMER-13252"/>
<dbReference type="BRENDA" id="4.2.1.165">
    <property type="organism ID" value="5381"/>
</dbReference>
<dbReference type="UniPathway" id="UPA00671"/>
<dbReference type="Proteomes" id="UP000002361">
    <property type="component" value="Chromosome"/>
</dbReference>
<dbReference type="GO" id="GO:0016836">
    <property type="term" value="F:hydro-lyase activity"/>
    <property type="evidence" value="ECO:0007669"/>
    <property type="project" value="InterPro"/>
</dbReference>
<dbReference type="GO" id="GO:0030494">
    <property type="term" value="P:bacteriochlorophyll biosynthetic process"/>
    <property type="evidence" value="ECO:0000315"/>
    <property type="project" value="CACAO"/>
</dbReference>
<dbReference type="GO" id="GO:0036070">
    <property type="term" value="P:light-independent bacteriochlorophyll biosynthetic process"/>
    <property type="evidence" value="ECO:0007669"/>
    <property type="project" value="UniProtKB-UniPathway"/>
</dbReference>
<dbReference type="GO" id="GO:0019685">
    <property type="term" value="P:photosynthesis, dark reaction"/>
    <property type="evidence" value="ECO:0007669"/>
    <property type="project" value="InterPro"/>
</dbReference>
<dbReference type="InterPro" id="IPR009905">
    <property type="entry name" value="BCHF"/>
</dbReference>
<dbReference type="NCBIfam" id="TIGR02020">
    <property type="entry name" value="BchF"/>
    <property type="match status" value="1"/>
</dbReference>
<dbReference type="Pfam" id="PF07284">
    <property type="entry name" value="BCHF"/>
    <property type="match status" value="1"/>
</dbReference>